<gene>
    <name type="primary">ndhG</name>
</gene>
<name>NU6C_NASOF</name>
<keyword id="KW-0150">Chloroplast</keyword>
<keyword id="KW-0472">Membrane</keyword>
<keyword id="KW-0520">NAD</keyword>
<keyword id="KW-0521">NADP</keyword>
<keyword id="KW-0934">Plastid</keyword>
<keyword id="KW-0618">Plastoquinone</keyword>
<keyword id="KW-0874">Quinone</keyword>
<keyword id="KW-0793">Thylakoid</keyword>
<keyword id="KW-1278">Translocase</keyword>
<keyword id="KW-0812">Transmembrane</keyword>
<keyword id="KW-1133">Transmembrane helix</keyword>
<keyword id="KW-0813">Transport</keyword>
<evidence type="ECO:0000250" key="1"/>
<evidence type="ECO:0000255" key="2"/>
<evidence type="ECO:0000305" key="3"/>
<accession>A4QLY8</accession>
<protein>
    <recommendedName>
        <fullName>NAD(P)H-quinone oxidoreductase subunit 6, chloroplastic</fullName>
        <ecNumber>7.1.1.-</ecNumber>
    </recommendedName>
    <alternativeName>
        <fullName>NAD(P)H dehydrogenase subunit 6</fullName>
    </alternativeName>
    <alternativeName>
        <fullName>NADH-plastoquinone oxidoreductase subunit 6</fullName>
    </alternativeName>
</protein>
<geneLocation type="chloroplast"/>
<proteinExistence type="inferred from homology"/>
<organism>
    <name type="scientific">Nasturtium officinale</name>
    <name type="common">Watercress</name>
    <name type="synonym">Rorippa nasturtium-aquaticum</name>
    <dbReference type="NCBI Taxonomy" id="65948"/>
    <lineage>
        <taxon>Eukaryota</taxon>
        <taxon>Viridiplantae</taxon>
        <taxon>Streptophyta</taxon>
        <taxon>Embryophyta</taxon>
        <taxon>Tracheophyta</taxon>
        <taxon>Spermatophyta</taxon>
        <taxon>Magnoliopsida</taxon>
        <taxon>eudicotyledons</taxon>
        <taxon>Gunneridae</taxon>
        <taxon>Pentapetalae</taxon>
        <taxon>rosids</taxon>
        <taxon>malvids</taxon>
        <taxon>Brassicales</taxon>
        <taxon>Brassicaceae</taxon>
        <taxon>Cardamineae</taxon>
        <taxon>Nasturtium</taxon>
    </lineage>
</organism>
<comment type="function">
    <text evidence="1">NDH shuttles electrons from NAD(P)H:plastoquinone, via FMN and iron-sulfur (Fe-S) centers, to quinones in the photosynthetic chain and possibly in a chloroplast respiratory chain. The immediate electron acceptor for the enzyme in this species is believed to be plastoquinone. Couples the redox reaction to proton translocation, and thus conserves the redox energy in a proton gradient (By similarity).</text>
</comment>
<comment type="catalytic activity">
    <reaction>
        <text>a plastoquinone + NADH + (n+1) H(+)(in) = a plastoquinol + NAD(+) + n H(+)(out)</text>
        <dbReference type="Rhea" id="RHEA:42608"/>
        <dbReference type="Rhea" id="RHEA-COMP:9561"/>
        <dbReference type="Rhea" id="RHEA-COMP:9562"/>
        <dbReference type="ChEBI" id="CHEBI:15378"/>
        <dbReference type="ChEBI" id="CHEBI:17757"/>
        <dbReference type="ChEBI" id="CHEBI:57540"/>
        <dbReference type="ChEBI" id="CHEBI:57945"/>
        <dbReference type="ChEBI" id="CHEBI:62192"/>
    </reaction>
</comment>
<comment type="catalytic activity">
    <reaction>
        <text>a plastoquinone + NADPH + (n+1) H(+)(in) = a plastoquinol + NADP(+) + n H(+)(out)</text>
        <dbReference type="Rhea" id="RHEA:42612"/>
        <dbReference type="Rhea" id="RHEA-COMP:9561"/>
        <dbReference type="Rhea" id="RHEA-COMP:9562"/>
        <dbReference type="ChEBI" id="CHEBI:15378"/>
        <dbReference type="ChEBI" id="CHEBI:17757"/>
        <dbReference type="ChEBI" id="CHEBI:57783"/>
        <dbReference type="ChEBI" id="CHEBI:58349"/>
        <dbReference type="ChEBI" id="CHEBI:62192"/>
    </reaction>
</comment>
<comment type="subunit">
    <text evidence="1">NDH is composed of at least 16 different subunits, 5 of which are encoded in the nucleus.</text>
</comment>
<comment type="subcellular location">
    <subcellularLocation>
        <location evidence="1">Plastid</location>
        <location evidence="1">Chloroplast thylakoid membrane</location>
        <topology evidence="1">Multi-pass membrane protein</topology>
    </subcellularLocation>
</comment>
<comment type="similarity">
    <text evidence="3">Belongs to the complex I subunit 6 family.</text>
</comment>
<reference key="1">
    <citation type="submission" date="2007-03" db="EMBL/GenBank/DDBJ databases">
        <title>Sequencing analysis of Nasturtium officinale chloroplast DNA.</title>
        <authorList>
            <person name="Hosouchi T."/>
            <person name="Tsuruoka H."/>
            <person name="Kotani H."/>
        </authorList>
    </citation>
    <scope>NUCLEOTIDE SEQUENCE [LARGE SCALE GENOMIC DNA]</scope>
</reference>
<sequence length="176" mass="19142">MDLPGPIHDFLLVFLGSGLLVGGLGVVLLPNPIFSAFSLGFVLVCISLLYILSNSHFVAAAQLLIYVGAINVLIIFAVMFMNDSEYSTDSNLWTVGNGITSLVCTTILFSLMSTILDTSWYGVIWTTRLNQILEQDLISNSQQIGIHLSTDFFLPFELISIILLVALIGAISVARQ</sequence>
<feature type="chain" id="PRO_0000360271" description="NAD(P)H-quinone oxidoreductase subunit 6, chloroplastic">
    <location>
        <begin position="1"/>
        <end position="176"/>
    </location>
</feature>
<feature type="transmembrane region" description="Helical" evidence="2">
    <location>
        <begin position="10"/>
        <end position="30"/>
    </location>
</feature>
<feature type="transmembrane region" description="Helical" evidence="2">
    <location>
        <begin position="32"/>
        <end position="52"/>
    </location>
</feature>
<feature type="transmembrane region" description="Helical" evidence="2">
    <location>
        <begin position="61"/>
        <end position="81"/>
    </location>
</feature>
<feature type="transmembrane region" description="Helical" evidence="2">
    <location>
        <begin position="92"/>
        <end position="112"/>
    </location>
</feature>
<feature type="transmembrane region" description="Helical" evidence="2">
    <location>
        <begin position="152"/>
        <end position="172"/>
    </location>
</feature>
<dbReference type="EC" id="7.1.1.-"/>
<dbReference type="EMBL" id="AP009376">
    <property type="protein sequence ID" value="BAF50693.1"/>
    <property type="molecule type" value="Genomic_DNA"/>
</dbReference>
<dbReference type="RefSeq" id="YP_001123868.1">
    <property type="nucleotide sequence ID" value="NC_009275.1"/>
</dbReference>
<dbReference type="SMR" id="A4QLY8"/>
<dbReference type="GeneID" id="4962119"/>
<dbReference type="GO" id="GO:0009535">
    <property type="term" value="C:chloroplast thylakoid membrane"/>
    <property type="evidence" value="ECO:0007669"/>
    <property type="project" value="UniProtKB-SubCell"/>
</dbReference>
<dbReference type="GO" id="GO:0008137">
    <property type="term" value="F:NADH dehydrogenase (ubiquinone) activity"/>
    <property type="evidence" value="ECO:0007669"/>
    <property type="project" value="InterPro"/>
</dbReference>
<dbReference type="GO" id="GO:0048038">
    <property type="term" value="F:quinone binding"/>
    <property type="evidence" value="ECO:0007669"/>
    <property type="project" value="UniProtKB-KW"/>
</dbReference>
<dbReference type="FunFam" id="1.20.120.1200:FF:000002">
    <property type="entry name" value="NAD(P)H-quinone oxidoreductase subunit 6, chloroplastic"/>
    <property type="match status" value="1"/>
</dbReference>
<dbReference type="Gene3D" id="1.20.120.1200">
    <property type="entry name" value="NADH-ubiquinone/plastoquinone oxidoreductase chain 6, subunit NuoJ"/>
    <property type="match status" value="1"/>
</dbReference>
<dbReference type="InterPro" id="IPR050290">
    <property type="entry name" value="NAD(P)H-Q_Oxidoreduct_6"/>
</dbReference>
<dbReference type="InterPro" id="IPR001457">
    <property type="entry name" value="NADH_UbQ/plastoQ_OxRdtase_su6"/>
</dbReference>
<dbReference type="InterPro" id="IPR042106">
    <property type="entry name" value="Nuo/plastoQ_OxRdtase_6_NuoJ"/>
</dbReference>
<dbReference type="PANTHER" id="PTHR48479">
    <property type="entry name" value="NAD(P)H-QUINONE OXIDOREDUCTASE SUBUNIT 6, CHLOROPLASTIC"/>
    <property type="match status" value="1"/>
</dbReference>
<dbReference type="PANTHER" id="PTHR48479:SF1">
    <property type="entry name" value="NAD(P)H-QUINONE OXIDOREDUCTASE SUBUNIT 6, CHLOROPLASTIC"/>
    <property type="match status" value="1"/>
</dbReference>
<dbReference type="Pfam" id="PF00499">
    <property type="entry name" value="Oxidored_q3"/>
    <property type="match status" value="1"/>
</dbReference>